<sequence length="371" mass="40279">MLMASTTSAVPGHPSLPSLPSNSSQERPLDTRDPLLARAELALLSIVFVAVALSNGLVLAALARRGRRGHWAPIHVFIGHLCLADLAVALFQVLPQLAWKATDRFRGPDALCRAVKYLQMVGMYASSYMILAMTLDRHRAICRPMLAYRHGSGAHWNRPVLVAWAFSLLLSLPQLFIFAQRNVEGGSGVTDCWACFAEPWGRRTYVTWIALMVFVAPTLGIAACQVLIFREIHASLVPGPSERPGGRRRGRRTGSPGEGAHVSAAVAKTVRMTLVIVVVYVLCWAPFFLVQLWAAWDPEAPLEGAPFVLLMLLASLNSCTNPWIYASFSSSVSSELRSLLCCARGRTPPSLGPQDESCTTASSSLAKDTSS</sequence>
<organism>
    <name type="scientific">Homo sapiens</name>
    <name type="common">Human</name>
    <dbReference type="NCBI Taxonomy" id="9606"/>
    <lineage>
        <taxon>Eukaryota</taxon>
        <taxon>Metazoa</taxon>
        <taxon>Chordata</taxon>
        <taxon>Craniata</taxon>
        <taxon>Vertebrata</taxon>
        <taxon>Euteleostomi</taxon>
        <taxon>Mammalia</taxon>
        <taxon>Eutheria</taxon>
        <taxon>Euarchontoglires</taxon>
        <taxon>Primates</taxon>
        <taxon>Haplorrhini</taxon>
        <taxon>Catarrhini</taxon>
        <taxon>Hominidae</taxon>
        <taxon>Homo</taxon>
    </lineage>
</organism>
<comment type="function">
    <text evidence="19">Receptor for arginine vasopressin. The activity of this receptor is mediated by G proteins which activate adenylate cyclase. Involved in renal water reabsorption.</text>
</comment>
<comment type="subunit">
    <text evidence="20 21">Interacts with ARRDC4 (PubMed:23236378). Identified in a complex containing at least ARRDC4, V2R and HGS (PubMed:23236378). Interacts with TMEM147 (PubMed:21056967).</text>
</comment>
<comment type="interaction">
    <interactant intactId="EBI-11675746">
        <id>P30518</id>
    </interactant>
    <interactant intactId="EBI-11673273">
        <id>Q8NCT1</id>
        <label>ARRDC4</label>
    </interactant>
    <organismsDiffer>false</organismsDiffer>
    <experiments>2</experiments>
</comment>
<comment type="interaction">
    <interactant intactId="EBI-11675746">
        <id>P30518</id>
    </interactant>
    <interactant intactId="EBI-372265">
        <id>P21964</id>
        <label>COMT</label>
    </interactant>
    <organismsDiffer>false</organismsDiffer>
    <experiments>3</experiments>
</comment>
<comment type="interaction">
    <interactant intactId="EBI-11675746">
        <id>P30518</id>
    </interactant>
    <interactant intactId="EBI-12266234">
        <id>Q8IVJ1</id>
        <label>SLC41A1</label>
    </interactant>
    <organismsDiffer>false</organismsDiffer>
    <experiments>3</experiments>
</comment>
<comment type="subcellular location">
    <subcellularLocation>
        <location evidence="21">Cell membrane</location>
        <topology evidence="46">Multi-pass membrane protein</topology>
    </subcellularLocation>
</comment>
<comment type="alternative products">
    <event type="alternative splicing"/>
    <isoform>
        <id>P30518-1</id>
        <name>1</name>
        <sequence type="displayed"/>
    </isoform>
    <isoform>
        <id>P30518-2</id>
        <name>2</name>
        <sequence type="described" ref="VSP_036990 VSP_036991"/>
    </isoform>
</comment>
<comment type="tissue specificity">
    <text>Kidney.</text>
</comment>
<comment type="disease" evidence="16">
    <disease id="DI-02040">
        <name>Nephrogenic syndrome of inappropriate antidiuresis</name>
        <acronym>NSIAD</acronym>
        <description>Characterized by an inability to excrete a free water load, with inappropriately concentrated urine and resultant hyponatremia, hypoosmolarity, and natriuresis.</description>
        <dbReference type="MIM" id="300539"/>
    </disease>
    <text>The disease is caused by variants affecting the gene represented in this entry.</text>
</comment>
<comment type="disease" evidence="4 5 6 7 8 9 10 11 12 13 14 15 17 22 23 24 25 26 27 28 29 30 31 32 33 34 35 36 37 39 40 41 42 43 44">
    <disease id="DI-00391">
        <name>Diabetes insipidus, nephrogenic, 1, X-linked</name>
        <acronym>NDI1</acronym>
        <description>A disorder caused by the inability of the renal collecting ducts to absorb water in response to arginine vasopressin. Characterized by excessive water drinking (polydipsia), excessive urine excretion (polyuria), persistent hypotonic urine, and hypokalemia.</description>
        <dbReference type="MIM" id="304800"/>
    </disease>
    <text>The disease is caused by variants affecting the gene represented in this entry.</text>
</comment>
<comment type="similarity">
    <text evidence="2">Belongs to the G-protein coupled receptor 1 family. Vasopressin/oxytocin receptor subfamily.</text>
</comment>
<evidence type="ECO:0000255" key="1"/>
<evidence type="ECO:0000255" key="2">
    <source>
        <dbReference type="PROSITE-ProRule" id="PRU00521"/>
    </source>
</evidence>
<evidence type="ECO:0000256" key="3">
    <source>
        <dbReference type="SAM" id="MobiDB-lite"/>
    </source>
</evidence>
<evidence type="ECO:0000269" key="4">
    <source>
    </source>
</evidence>
<evidence type="ECO:0000269" key="5">
    <source>
    </source>
</evidence>
<evidence type="ECO:0000269" key="6">
    <source>
    </source>
</evidence>
<evidence type="ECO:0000269" key="7">
    <source>
    </source>
</evidence>
<evidence type="ECO:0000269" key="8">
    <source>
    </source>
</evidence>
<evidence type="ECO:0000269" key="9">
    <source>
    </source>
</evidence>
<evidence type="ECO:0000269" key="10">
    <source>
    </source>
</evidence>
<evidence type="ECO:0000269" key="11">
    <source>
    </source>
</evidence>
<evidence type="ECO:0000269" key="12">
    <source>
    </source>
</evidence>
<evidence type="ECO:0000269" key="13">
    <source>
    </source>
</evidence>
<evidence type="ECO:0000269" key="14">
    <source>
    </source>
</evidence>
<evidence type="ECO:0000269" key="15">
    <source>
    </source>
</evidence>
<evidence type="ECO:0000269" key="16">
    <source>
    </source>
</evidence>
<evidence type="ECO:0000269" key="17">
    <source>
    </source>
</evidence>
<evidence type="ECO:0000269" key="18">
    <source>
    </source>
</evidence>
<evidence type="ECO:0000269" key="19">
    <source>
    </source>
</evidence>
<evidence type="ECO:0000269" key="20">
    <source>
    </source>
</evidence>
<evidence type="ECO:0000269" key="21">
    <source>
    </source>
</evidence>
<evidence type="ECO:0000269" key="22">
    <source>
    </source>
</evidence>
<evidence type="ECO:0000269" key="23">
    <source>
    </source>
</evidence>
<evidence type="ECO:0000269" key="24">
    <source>
    </source>
</evidence>
<evidence type="ECO:0000269" key="25">
    <source>
    </source>
</evidence>
<evidence type="ECO:0000269" key="26">
    <source>
    </source>
</evidence>
<evidence type="ECO:0000269" key="27">
    <source>
    </source>
</evidence>
<evidence type="ECO:0000269" key="28">
    <source>
    </source>
</evidence>
<evidence type="ECO:0000269" key="29">
    <source>
    </source>
</evidence>
<evidence type="ECO:0000269" key="30">
    <source>
    </source>
</evidence>
<evidence type="ECO:0000269" key="31">
    <source>
    </source>
</evidence>
<evidence type="ECO:0000269" key="32">
    <source>
    </source>
</evidence>
<evidence type="ECO:0000269" key="33">
    <source>
    </source>
</evidence>
<evidence type="ECO:0000269" key="34">
    <source>
    </source>
</evidence>
<evidence type="ECO:0000269" key="35">
    <source>
    </source>
</evidence>
<evidence type="ECO:0000269" key="36">
    <source>
    </source>
</evidence>
<evidence type="ECO:0000269" key="37">
    <source>
    </source>
</evidence>
<evidence type="ECO:0000269" key="38">
    <source>
    </source>
</evidence>
<evidence type="ECO:0000269" key="39">
    <source>
    </source>
</evidence>
<evidence type="ECO:0000269" key="40">
    <source>
    </source>
</evidence>
<evidence type="ECO:0000269" key="41">
    <source>
    </source>
</evidence>
<evidence type="ECO:0000269" key="42">
    <source>
    </source>
</evidence>
<evidence type="ECO:0000269" key="43">
    <source>
    </source>
</evidence>
<evidence type="ECO:0000269" key="44">
    <source>
    </source>
</evidence>
<evidence type="ECO:0000303" key="45">
    <source>
    </source>
</evidence>
<evidence type="ECO:0000305" key="46"/>
<evidence type="ECO:0007829" key="47">
    <source>
        <dbReference type="PDB" id="7DFC"/>
    </source>
</evidence>
<evidence type="ECO:0007829" key="48">
    <source>
        <dbReference type="PDB" id="7DW9"/>
    </source>
</evidence>
<evidence type="ECO:0007829" key="49">
    <source>
        <dbReference type="PDB" id="7KH0"/>
    </source>
</evidence>
<feature type="chain" id="PRO_0000070208" description="Vasopressin V2 receptor">
    <location>
        <begin position="1"/>
        <end position="371"/>
    </location>
</feature>
<feature type="topological domain" description="Extracellular" evidence="1">
    <location>
        <begin position="1"/>
        <end position="38"/>
    </location>
</feature>
<feature type="transmembrane region" description="Helical; Name=1" evidence="1">
    <location>
        <begin position="39"/>
        <end position="63"/>
    </location>
</feature>
<feature type="topological domain" description="Cytoplasmic" evidence="1">
    <location>
        <begin position="64"/>
        <end position="77"/>
    </location>
</feature>
<feature type="transmembrane region" description="Helical; Name=2" evidence="1">
    <location>
        <begin position="78"/>
        <end position="98"/>
    </location>
</feature>
<feature type="topological domain" description="Extracellular" evidence="1">
    <location>
        <begin position="99"/>
        <end position="113"/>
    </location>
</feature>
<feature type="transmembrane region" description="Helical; Name=3" evidence="1">
    <location>
        <begin position="114"/>
        <end position="135"/>
    </location>
</feature>
<feature type="topological domain" description="Cytoplasmic" evidence="1">
    <location>
        <begin position="136"/>
        <end position="159"/>
    </location>
</feature>
<feature type="transmembrane region" description="Helical; Name=4" evidence="1">
    <location>
        <begin position="160"/>
        <end position="180"/>
    </location>
</feature>
<feature type="topological domain" description="Extracellular" evidence="1">
    <location>
        <begin position="181"/>
        <end position="200"/>
    </location>
</feature>
<feature type="transmembrane region" description="Helical; Name=5" evidence="1">
    <location>
        <begin position="201"/>
        <end position="220"/>
    </location>
</feature>
<feature type="topological domain" description="Cytoplasmic" evidence="1">
    <location>
        <begin position="221"/>
        <end position="271"/>
    </location>
</feature>
<feature type="transmembrane region" description="Helical; Name=6" evidence="1">
    <location>
        <begin position="272"/>
        <end position="293"/>
    </location>
</feature>
<feature type="topological domain" description="Extracellular" evidence="1">
    <location>
        <begin position="294"/>
        <end position="308"/>
    </location>
</feature>
<feature type="transmembrane region" description="Helical; Name=7" evidence="1">
    <location>
        <begin position="309"/>
        <end position="328"/>
    </location>
</feature>
<feature type="topological domain" description="Cytoplasmic" evidence="1">
    <location>
        <begin position="329"/>
        <end position="371"/>
    </location>
</feature>
<feature type="region of interest" description="Disordered" evidence="3">
    <location>
        <begin position="1"/>
        <end position="30"/>
    </location>
</feature>
<feature type="region of interest" description="Disordered" evidence="3">
    <location>
        <begin position="240"/>
        <end position="259"/>
    </location>
</feature>
<feature type="region of interest" description="Disordered" evidence="3">
    <location>
        <begin position="349"/>
        <end position="371"/>
    </location>
</feature>
<feature type="compositionally biased region" description="Low complexity" evidence="3">
    <location>
        <begin position="15"/>
        <end position="24"/>
    </location>
</feature>
<feature type="compositionally biased region" description="Polar residues" evidence="3">
    <location>
        <begin position="356"/>
        <end position="371"/>
    </location>
</feature>
<feature type="lipid moiety-binding region" description="S-palmitoyl cysteine" evidence="38">
    <location>
        <position position="341"/>
    </location>
</feature>
<feature type="lipid moiety-binding region" description="S-palmitoyl cysteine" evidence="38">
    <location>
        <position position="342"/>
    </location>
</feature>
<feature type="glycosylation site" description="N-linked (GlcNAc...) asparagine" evidence="1">
    <location>
        <position position="22"/>
    </location>
</feature>
<feature type="splice variant" id="VSP_036990" description="In isoform 2." evidence="45">
    <original>APFVL</original>
    <variation>GCSRG</variation>
    <location>
        <begin position="305"/>
        <end position="309"/>
    </location>
</feature>
<feature type="splice variant" id="VSP_036991" description="In isoform 2." evidence="45">
    <location>
        <begin position="310"/>
        <end position="371"/>
    </location>
</feature>
<feature type="sequence variant" id="VAR_003516" description="In dbSNP:rs5196.">
    <original>T</original>
    <variation>S</variation>
    <location>
        <position position="7"/>
    </location>
</feature>
<feature type="sequence variant" id="VAR_015296" description="In dbSNP:rs2071126.">
    <original>G</original>
    <variation>E</variation>
    <location>
        <position position="12"/>
    </location>
</feature>
<feature type="sequence variant" id="VAR_011858" description="In dbSNP:rs5198.">
    <original>A</original>
    <variation>V</variation>
    <location>
        <position position="42"/>
    </location>
</feature>
<feature type="sequence variant" id="VAR_015297" description="In NDI1." evidence="40">
    <original>L</original>
    <variation>P</variation>
    <location>
        <position position="43"/>
    </location>
</feature>
<feature type="sequence variant" id="VAR_003517" description="In NDI1." evidence="29">
    <original>L</original>
    <variation>P</variation>
    <location>
        <position position="44"/>
    </location>
</feature>
<feature type="sequence variant" id="VAR_015298" description="In NDI1; dbSNP:rs104894759." evidence="6">
    <original>I</original>
    <variation>K</variation>
    <location>
        <position position="46"/>
    </location>
</feature>
<feature type="sequence variant" id="VAR_015299" description="In NDI1." evidence="25">
    <original>L</original>
    <variation>R</variation>
    <location>
        <position position="53"/>
    </location>
</feature>
<feature type="sequence variant" id="VAR_015300" description="In NDI1." evidence="44">
    <original>N</original>
    <variation>D</variation>
    <location>
        <position position="55"/>
    </location>
</feature>
<feature type="sequence variant" id="VAR_015301" description="In NDI1." evidence="43">
    <original>N</original>
    <variation>H</variation>
    <location>
        <position position="55"/>
    </location>
</feature>
<feature type="sequence variant" id="VAR_015302" description="In NDI1; dbSNP:rs193922112." evidence="43">
    <original>L</original>
    <variation>P</variation>
    <location>
        <position position="59"/>
    </location>
</feature>
<feature type="sequence variant" id="VAR_015303">
    <original>A</original>
    <variation>V</variation>
    <location>
        <position position="61"/>
    </location>
</feature>
<feature type="sequence variant" id="VAR_003518" description="In NDI1.">
    <location>
        <begin position="62"/>
        <end position="64"/>
    </location>
</feature>
<feature type="sequence variant" id="VAR_015304" description="In NDI1." evidence="26">
    <original>L</original>
    <variation>P</variation>
    <location>
        <position position="62"/>
    </location>
</feature>
<feature type="sequence variant" id="VAR_003519" description="In dbSNP:rs150351033.">
    <original>R</original>
    <variation>W</variation>
    <location>
        <position position="64"/>
    </location>
</feature>
<feature type="sequence variant" id="VAR_003520" description="In NDI1." evidence="31">
    <original>H</original>
    <variation>R</variation>
    <location>
        <position position="80"/>
    </location>
</feature>
<feature type="sequence variant" id="VAR_015305" description="In NDI1." evidence="26">
    <original>L</original>
    <variation>F</variation>
    <location>
        <position position="81"/>
    </location>
</feature>
<feature type="sequence variant" id="VAR_015306" description="In NDI1." evidence="25">
    <original>L</original>
    <variation>P</variation>
    <location>
        <position position="83"/>
    </location>
</feature>
<feature type="sequence variant" id="VAR_015307" description="In NDI1." evidence="11">
    <original>L</original>
    <variation>Q</variation>
    <location>
        <position position="83"/>
    </location>
</feature>
<feature type="sequence variant" id="VAR_015308" description="In NDI1." evidence="7">
    <original>A</original>
    <variation>D</variation>
    <location>
        <position position="84"/>
    </location>
</feature>
<feature type="sequence variant" id="VAR_015309" description="In NDI1; dbSNP:rs104894754." evidence="26">
    <original>D</original>
    <variation>N</variation>
    <location>
        <position position="85"/>
    </location>
</feature>
<feature type="sequence variant" id="VAR_003521" description="In NDI1." evidence="30">
    <original>V</original>
    <variation>M</variation>
    <location>
        <position position="88"/>
    </location>
</feature>
<feature type="sequence variant" id="VAR_015310" description="In NDI1." evidence="44">
    <original>Q</original>
    <variation>R</variation>
    <location>
        <position position="92"/>
    </location>
</feature>
<feature type="sequence variant" id="VAR_015311" description="In NDI1." evidence="8">
    <original>L</original>
    <variation>Q</variation>
    <location>
        <position position="94"/>
    </location>
</feature>
<feature type="sequence variant" id="VAR_015312" description="In NDI1." evidence="25">
    <original>P</original>
    <variation>L</variation>
    <location>
        <position position="95"/>
    </location>
</feature>
<feature type="sequence variant" id="VAR_015313" description="In NDI1." evidence="7">
    <original>W</original>
    <variation>R</variation>
    <location>
        <position position="99"/>
    </location>
</feature>
<feature type="sequence variant" id="VAR_015314" description="In NDI1; binding capacity is 10% of wild-type, but binding affinity is stronger than wild-type; dbSNP:rs104894760." evidence="10">
    <original>R</original>
    <variation>C</variation>
    <location>
        <position position="104"/>
    </location>
</feature>
<feature type="sequence variant" id="VAR_015315" description="In NDI1; dbSNP:rs104894758." evidence="6">
    <original>F</original>
    <variation>V</variation>
    <location>
        <position position="105"/>
    </location>
</feature>
<feature type="sequence variant" id="VAR_003522" description="In NDI1." evidence="12 30">
    <original>R</original>
    <variation>C</variation>
    <location>
        <position position="106"/>
    </location>
</feature>
<feature type="sequence variant" id="VAR_015316" description="In NDI1." evidence="40">
    <original>G</original>
    <variation>E</variation>
    <location>
        <position position="107"/>
    </location>
</feature>
<feature type="sequence variant" id="VAR_003523" description="In NDI1." evidence="5 30">
    <original>C</original>
    <variation>R</variation>
    <location>
        <position position="112"/>
    </location>
</feature>
<feature type="sequence variant" id="VAR_015317" description="In NDI1." evidence="7">
    <original>C</original>
    <variation>Y</variation>
    <location>
        <position position="112"/>
    </location>
</feature>
<feature type="sequence variant" id="VAR_003524" description="In NDI1; dbSNP:rs28935496." evidence="27 30 34">
    <original>R</original>
    <variation>W</variation>
    <location>
        <position position="113"/>
    </location>
</feature>
<feature type="sequence variant" id="VAR_062591" description="In NDI1." evidence="17">
    <original>G</original>
    <variation>D</variation>
    <location>
        <position position="122"/>
    </location>
</feature>
<feature type="sequence variant" id="VAR_015318" description="In NDI1." evidence="44">
    <original>G</original>
    <variation>R</variation>
    <location>
        <position position="122"/>
    </location>
</feature>
<feature type="sequence variant" id="VAR_015319" description="In NDI1." evidence="8">
    <original>M</original>
    <variation>K</variation>
    <location>
        <position position="123"/>
    </location>
</feature>
<feature type="sequence variant" id="VAR_003525" description="In NDI1." evidence="30">
    <original>S</original>
    <variation>F</variation>
    <location>
        <position position="126"/>
    </location>
</feature>
<feature type="sequence variant" id="VAR_015320" description="In NDI1." evidence="8">
    <original>S</original>
    <variation>F</variation>
    <location>
        <position position="127"/>
    </location>
</feature>
<feature type="sequence variant" id="VAR_003526" description="In NDI1." evidence="13 24 30">
    <original>Y</original>
    <variation>S</variation>
    <location>
        <position position="128"/>
    </location>
</feature>
<feature type="sequence variant" id="VAR_015321" description="In NDI1; dbSNP:rs796052096." evidence="6">
    <original>I</original>
    <variation>F</variation>
    <location>
        <position position="130"/>
    </location>
</feature>
<feature type="sequence variant" id="VAR_003527" description="In NDI1; dbSNP:rs104894747." evidence="15">
    <original>A</original>
    <variation>D</variation>
    <location>
        <position position="132"/>
    </location>
</feature>
<feature type="sequence variant" id="VAR_015322" description="In NDI1; dbSNP:rs1557100610." evidence="8">
    <original>L</original>
    <variation>P</variation>
    <location>
        <position position="135"/>
    </location>
</feature>
<feature type="sequence variant" id="VAR_025901" description="In NSIAD; constitutively active; dbSNP:rs104894761." evidence="16">
    <original>R</original>
    <variation>C</variation>
    <location>
        <position position="137"/>
    </location>
</feature>
<feature type="sequence variant" id="VAR_003528" description="In NDI1; fails to activate the adenylyl cyclase system; dbSNP:rs104894756." evidence="17 30 35 41 42">
    <original>R</original>
    <variation>H</variation>
    <location>
        <position position="137"/>
    </location>
</feature>
<feature type="sequence variant" id="VAR_025902" description="In NSIAD; constitutively active; dbSNP:rs104894756." evidence="16">
    <original>R</original>
    <variation>L</variation>
    <location>
        <position position="137"/>
    </location>
</feature>
<feature type="sequence variant" id="VAR_015323">
    <original>R</original>
    <variation>S</variation>
    <location>
        <position position="139"/>
    </location>
</feature>
<feature type="sequence variant" id="VAR_003529" description="In NDI1." evidence="22 33">
    <original>R</original>
    <variation>P</variation>
    <location>
        <position position="143"/>
    </location>
</feature>
<feature type="sequence variant" id="VAR_003530" description="In dbSNP:rs5200.">
    <original>A</original>
    <variation>V</variation>
    <location>
        <position position="147"/>
    </location>
</feature>
<feature type="sequence variant" id="VAR_015324" description="In NDI1." evidence="4">
    <original>A</original>
    <variation>P</variation>
    <location>
        <position position="163"/>
    </location>
</feature>
<feature type="sequence variant" id="VAR_003531" description="In NDI1." evidence="30">
    <original>W</original>
    <variation>S</variation>
    <location>
        <position position="164"/>
    </location>
</feature>
<feature type="sequence variant" id="VAR_003532" description="In NDI1." evidence="30">
    <original>S</original>
    <variation>L</variation>
    <location>
        <position position="167"/>
    </location>
</feature>
<feature type="sequence variant" id="VAR_003533" description="In NDI1." evidence="29">
    <original>S</original>
    <variation>T</variation>
    <location>
        <position position="167"/>
    </location>
</feature>
<feature type="sequence variant" id="VAR_015325" description="In NDI1." evidence="7">
    <original>P</original>
    <variation>S</variation>
    <location>
        <position position="173"/>
    </location>
</feature>
<feature type="sequence variant" id="VAR_015326" description="In NDI1." evidence="8">
    <original>Q</original>
    <variation>L</variation>
    <location>
        <position position="174"/>
    </location>
</feature>
<feature type="sequence variant" id="VAR_003534" description="In NDI1; dbSNP:rs104894757." evidence="13 30 42">
    <original>R</original>
    <variation>C</variation>
    <location>
        <position position="181"/>
    </location>
</feature>
<feature type="sequence variant" id="VAR_003535" description="In NDI1; dbSNP:rs104894748." evidence="14">
    <original>G</original>
    <variation>C</variation>
    <location>
        <position position="185"/>
    </location>
</feature>
<feature type="sequence variant" id="VAR_015327" description="In NDI1." evidence="8">
    <original>D</original>
    <variation>G</variation>
    <location>
        <position position="191"/>
    </location>
</feature>
<feature type="sequence variant" id="VAR_015328" description="In NDI1; dbSNP:rs104894755." evidence="39">
    <original>G</original>
    <variation>D</variation>
    <location>
        <position position="201"/>
    </location>
</feature>
<feature type="sequence variant" id="VAR_003536" description="In NDI1; dbSNP:rs782806507." evidence="22 30">
    <original>R</original>
    <variation>C</variation>
    <location>
        <position position="202"/>
    </location>
</feature>
<feature type="sequence variant" id="VAR_003537" description="In NDI1; dbSNP:rs104894750." evidence="14">
    <original>R</original>
    <variation>C</variation>
    <location>
        <position position="203"/>
    </location>
</feature>
<feature type="sequence variant" id="VAR_015329" description="In NDI1." evidence="9">
    <original>T</original>
    <variation>N</variation>
    <location>
        <position position="204"/>
    </location>
</feature>
<feature type="sequence variant" id="VAR_003538" description="In NDI1; dbSNP:rs104894749." evidence="9 14">
    <original>Y</original>
    <variation>C</variation>
    <location>
        <position position="205"/>
    </location>
</feature>
<feature type="sequence variant" id="VAR_015330" description="In NDI1." evidence="9">
    <original>V</original>
    <variation>D</variation>
    <location>
        <position position="206"/>
    </location>
</feature>
<feature type="sequence variant" id="VAR_015331" description="In NDI1." evidence="37">
    <original>T</original>
    <variation>N</variation>
    <location>
        <position position="207"/>
    </location>
</feature>
<feature type="sequence variant" id="VAR_015332" description="In NDI1." evidence="43">
    <original>I</original>
    <variation>F</variation>
    <location>
        <position position="209"/>
    </location>
</feature>
<feature type="sequence variant" id="VAR_015333" description="In NDI1." evidence="8">
    <original>F</original>
    <variation>S</variation>
    <location>
        <position position="214"/>
    </location>
</feature>
<feature type="sequence variant" id="VAR_015334" description="In dbSNP:rs112109182.">
    <original>V</original>
    <variation>M</variation>
    <location>
        <position position="215"/>
    </location>
</feature>
<feature type="sequence variant" id="VAR_015335" description="In NDI1." evidence="8">
    <original>P</original>
    <variation>T</variation>
    <location>
        <position position="217"/>
    </location>
</feature>
<feature type="sequence variant" id="VAR_015336" description="In NDI1." evidence="37">
    <original>L</original>
    <variation>P</variation>
    <location>
        <position position="219"/>
    </location>
</feature>
<feature type="sequence variant" id="VAR_015337" description="In NDI1." evidence="23">
    <original>L</original>
    <variation>R</variation>
    <location>
        <position position="219"/>
    </location>
</feature>
<feature type="sequence variant" id="VAR_003539" description="In NDI1." evidence="13">
    <location>
        <begin position="247"/>
        <end position="250"/>
    </location>
</feature>
<feature type="sequence variant" id="VAR_035769" description="In a breast cancer sample; somatic mutation; dbSNP:rs149668713." evidence="18">
    <original>R</original>
    <variation>H</variation>
    <location>
        <position position="247"/>
    </location>
</feature>
<feature type="sequence variant" id="VAR_015338" description="In dbSNP:rs61733407.">
    <original>R</original>
    <variation>W</variation>
    <location>
        <position position="252"/>
    </location>
</feature>
<feature type="sequence variant" id="VAR_015339" description="In NDI1." evidence="44">
    <original>M</original>
    <variation>K</variation>
    <location>
        <position position="272"/>
    </location>
</feature>
<feature type="sequence variant" id="VAR_015340" description="In NDI1." evidence="28">
    <original>V</original>
    <variation>A</variation>
    <location>
        <position position="277"/>
    </location>
</feature>
<feature type="sequence variant" id="VAR_003540" description="In NDI1." evidence="22 24 33 41">
    <location>
        <position position="277"/>
    </location>
</feature>
<feature type="sequence variant" id="VAR_003541" description="In NDI1; dbSNP:rs104894752." evidence="28 32">
    <original>Y</original>
    <variation>C</variation>
    <location>
        <position position="280"/>
    </location>
</feature>
<feature type="sequence variant" id="VAR_015341" description="In NDI1." evidence="7">
    <original>L</original>
    <variation>P</variation>
    <location>
        <position position="282"/>
    </location>
</feature>
<feature type="sequence variant" id="VAR_003542" description="In NDI1; dbSNP:rs193922122." evidence="30">
    <original>A</original>
    <variation>P</variation>
    <location>
        <position position="285"/>
    </location>
</feature>
<feature type="sequence variant" id="VAR_003543" description="In NDI1; dbSNP:rs1557100917." evidence="24">
    <original>P</original>
    <variation>L</variation>
    <location>
        <position position="286"/>
    </location>
</feature>
<feature type="sequence variant" id="VAR_003544" description="In NDI1." evidence="13">
    <original>P</original>
    <variation>R</variation>
    <location>
        <position position="286"/>
    </location>
</feature>
<feature type="sequence variant" id="VAR_015342" description="In NDI1." evidence="8">
    <original>P</original>
    <variation>S</variation>
    <location>
        <position position="286"/>
    </location>
</feature>
<feature type="sequence variant" id="VAR_015343" description="In NDI1." evidence="12">
    <original>F</original>
    <variation>L</variation>
    <location>
        <position position="287"/>
    </location>
</feature>
<feature type="sequence variant" id="VAR_015344" description="In NDI1." evidence="8">
    <original>L</original>
    <variation>P</variation>
    <location>
        <position position="289"/>
    </location>
</feature>
<feature type="sequence variant" id="VAR_003545" description="In NDI1." evidence="28">
    <original>L</original>
    <variation>P</variation>
    <location>
        <position position="292"/>
    </location>
</feature>
<feature type="sequence variant" id="VAR_015345" description="In NDI1." evidence="43">
    <original>A</original>
    <variation>P</variation>
    <location>
        <position position="294"/>
    </location>
</feature>
<feature type="sequence variant" id="VAR_003546" description="In NDI1." evidence="41">
    <original>L</original>
    <variation>P</variation>
    <location>
        <position position="309"/>
    </location>
</feature>
<feature type="sequence variant" id="VAR_015346" description="In NDI1." evidence="7">
    <original>L</original>
    <variation>R</variation>
    <location>
        <position position="309"/>
    </location>
</feature>
<feature type="sequence variant" id="VAR_015347" description="In NDI1." evidence="8 44">
    <original>S</original>
    <variation>R</variation>
    <location>
        <position position="315"/>
    </location>
</feature>
<feature type="sequence variant" id="VAR_003547" description="In NDI1." evidence="5">
    <original>N</original>
    <variation>K</variation>
    <location>
        <position position="317"/>
    </location>
</feature>
<feature type="sequence variant" id="VAR_015348">
    <original>S</original>
    <variation>T</variation>
    <location>
        <position position="318"/>
    </location>
</feature>
<feature type="sequence variant" id="VAR_015349" description="In NDI1." evidence="44">
    <original>C</original>
    <variation>R</variation>
    <location>
        <position position="319"/>
    </location>
</feature>
<feature type="sequence variant" id="VAR_015350" description="In NDI1." evidence="8">
    <original>N</original>
    <variation>D</variation>
    <location>
        <position position="321"/>
    </location>
</feature>
<feature type="sequence variant" id="VAR_015351" description="In NDI1; dbSNP:rs193922123." evidence="8">
    <original>N</original>
    <variation>K</variation>
    <location>
        <position position="321"/>
    </location>
</feature>
<feature type="sequence variant" id="VAR_015352" description="In NDI1." evidence="44">
    <original>N</original>
    <variation>Y</variation>
    <location>
        <position position="321"/>
    </location>
</feature>
<feature type="sequence variant" id="VAR_015353" description="In NDI1." evidence="36">
    <original>P</original>
    <variation>H</variation>
    <location>
        <position position="322"/>
    </location>
</feature>
<feature type="sequence variant" id="VAR_015354" description="In NDI1." evidence="40">
    <original>P</original>
    <variation>S</variation>
    <location>
        <position position="322"/>
    </location>
</feature>
<feature type="sequence variant" id="VAR_015355" description="In NDI1." evidence="7">
    <original>W</original>
    <variation>R</variation>
    <location>
        <position position="323"/>
    </location>
</feature>
<feature type="sequence variant" id="VAR_003548" description="In NDI1." evidence="5">
    <original>W</original>
    <variation>S</variation>
    <location>
        <position position="323"/>
    </location>
</feature>
<feature type="sequence variant" id="VAR_015356" description="In dbSNP:rs146350208.">
    <original>G</original>
    <variation>D</variation>
    <location>
        <position position="352"/>
    </location>
</feature>
<feature type="mutagenesis site" description="Reduced palmitoylation, reduced cell surface localization but coupling to G protein unaffected." evidence="38">
    <original>C</original>
    <variation>S</variation>
    <location>
        <position position="341"/>
    </location>
</feature>
<feature type="mutagenesis site" description="Reduced palmitoylation, reduced cell surface localization but coupling to G protein unaffected." evidence="38">
    <original>C</original>
    <variation>S</variation>
    <location>
        <position position="342"/>
    </location>
</feature>
<feature type="helix" evidence="48">
    <location>
        <begin position="34"/>
        <end position="66"/>
    </location>
</feature>
<feature type="helix" evidence="48">
    <location>
        <begin position="73"/>
        <end position="91"/>
    </location>
</feature>
<feature type="helix" evidence="48">
    <location>
        <begin position="93"/>
        <end position="101"/>
    </location>
</feature>
<feature type="strand" evidence="48">
    <location>
        <begin position="102"/>
        <end position="104"/>
    </location>
</feature>
<feature type="helix" evidence="48">
    <location>
        <begin position="109"/>
        <end position="142"/>
    </location>
</feature>
<feature type="turn" evidence="49">
    <location>
        <begin position="144"/>
        <end position="148"/>
    </location>
</feature>
<feature type="helix" evidence="48">
    <location>
        <begin position="158"/>
        <end position="170"/>
    </location>
</feature>
<feature type="turn" evidence="48">
    <location>
        <begin position="171"/>
        <end position="173"/>
    </location>
</feature>
<feature type="helix" evidence="48">
    <location>
        <begin position="174"/>
        <end position="177"/>
    </location>
</feature>
<feature type="strand" evidence="48">
    <location>
        <begin position="178"/>
        <end position="181"/>
    </location>
</feature>
<feature type="strand" evidence="48">
    <location>
        <begin position="191"/>
        <end position="194"/>
    </location>
</feature>
<feature type="turn" evidence="48">
    <location>
        <begin position="198"/>
        <end position="200"/>
    </location>
</feature>
<feature type="helix" evidence="48">
    <location>
        <begin position="201"/>
        <end position="213"/>
    </location>
</feature>
<feature type="helix" evidence="48">
    <location>
        <begin position="215"/>
        <end position="234"/>
    </location>
</feature>
<feature type="helix" evidence="48">
    <location>
        <begin position="264"/>
        <end position="296"/>
    </location>
</feature>
<feature type="strand" evidence="49">
    <location>
        <begin position="297"/>
        <end position="299"/>
    </location>
</feature>
<feature type="helix" evidence="48">
    <location>
        <begin position="305"/>
        <end position="310"/>
    </location>
</feature>
<feature type="helix" evidence="48">
    <location>
        <begin position="311"/>
        <end position="315"/>
    </location>
</feature>
<feature type="helix" evidence="48">
    <location>
        <begin position="316"/>
        <end position="328"/>
    </location>
</feature>
<feature type="helix" evidence="48">
    <location>
        <begin position="330"/>
        <end position="337"/>
    </location>
</feature>
<feature type="strand" evidence="47">
    <location>
        <begin position="349"/>
        <end position="351"/>
    </location>
</feature>
<feature type="strand" evidence="47">
    <location>
        <begin position="361"/>
        <end position="364"/>
    </location>
</feature>
<reference key="1">
    <citation type="journal article" date="1992" name="Am. J. Hum. Genet.">
        <title>Structure and chromosomal localization of the human antidiuretic hormone receptor gene.</title>
        <authorList>
            <person name="Seibold A."/>
            <person name="Brabet P."/>
            <person name="Rosenthal W."/>
            <person name="Birnbaumer M."/>
        </authorList>
    </citation>
    <scope>NUCLEOTIDE SEQUENCE [GENOMIC DNA]</scope>
</reference>
<reference key="2">
    <citation type="journal article" date="1992" name="Nature">
        <title>Molecular cloning of the receptor for human antidiuretic hormone.</title>
        <authorList>
            <person name="Birnbaumer M."/>
            <person name="Seibold A."/>
            <person name="Gilbert S."/>
            <person name="Ishido M."/>
            <person name="Barberis C."/>
            <person name="Antaramian A."/>
            <person name="Brabet P."/>
            <person name="Rosenthal W."/>
        </authorList>
    </citation>
    <scope>NUCLEOTIDE SEQUENCE [MRNA] (ISOFORM 1)</scope>
    <source>
        <tissue>Kidney</tissue>
    </source>
</reference>
<reference key="3">
    <citation type="journal article" date="1994" name="Am. J. Hum. Genet.">
        <title>Heterogeneous AVPR2 gene mutations in congenital nephrogenic diabetes insipidus.</title>
        <authorList>
            <person name="Wildin R.S."/>
            <person name="Antush M.J."/>
            <person name="Bennett R.L."/>
            <person name="Schoof J.M."/>
            <person name="Scott C.R."/>
        </authorList>
    </citation>
    <scope>NUCLEOTIDE SEQUENCE [GENOMIC DNA]</scope>
    <scope>VARIANTS NDI1 ARG-53; PRO-83 AND LEU-95</scope>
</reference>
<reference key="4">
    <citation type="journal article" date="1996" name="Peptides">
        <title>Evidence for expression of vasopressin V2 receptor mRNA in human lung.</title>
        <authorList>
            <person name="Fay M.J."/>
            <person name="Du J."/>
            <person name="Yu X."/>
            <person name="North W.G."/>
        </authorList>
    </citation>
    <scope>NUCLEOTIDE SEQUENCE [MRNA] (ISOFORM 1)</scope>
    <source>
        <tissue>Lung</tissue>
    </source>
</reference>
<reference key="5">
    <citation type="journal article" date="1998" name="Cancer Res.">
        <title>Expression of all known vasopressin receptor subtypes by small cell tumors implies a multifaceted role for this neuropeptide.</title>
        <authorList>
            <person name="North W.G."/>
            <person name="Fay M.J."/>
            <person name="Longo K.A."/>
            <person name="Du J."/>
        </authorList>
    </citation>
    <scope>NUCLEOTIDE SEQUENCE [MRNA] (ISOFORMS 1 AND 2)</scope>
    <source>
        <tissue>Lung carcinoma</tissue>
        <tissue>Mammary cancer</tissue>
    </source>
</reference>
<reference key="6">
    <citation type="journal article" date="2009" name="PLoS ONE">
        <title>Involvement of the V2 vasopressin receptor in adaptation to limited water supply.</title>
        <authorList>
            <person name="Boselt I."/>
            <person name="Rompler H."/>
            <person name="Hermsdorf T."/>
            <person name="Thor D."/>
            <person name="Busch W."/>
            <person name="Schulz A."/>
            <person name="Schoneberg T."/>
        </authorList>
    </citation>
    <scope>NUCLEOTIDE SEQUENCE [GENOMIC DNA]</scope>
    <scope>FUNCTION</scope>
</reference>
<reference key="7">
    <citation type="submission" date="2003-02" db="EMBL/GenBank/DDBJ databases">
        <title>cDNA clones of human proteins involved in signal transduction sequenced by the Guthrie cDNA resource center (www.cdna.org).</title>
        <authorList>
            <person name="Warren C.N."/>
            <person name="Aronstam R.S."/>
            <person name="Sharma S.V."/>
        </authorList>
    </citation>
    <scope>NUCLEOTIDE SEQUENCE [LARGE SCALE MRNA] (ISOFORM 1)</scope>
    <source>
        <tissue>Kidney</tissue>
    </source>
</reference>
<reference key="8">
    <citation type="submission" date="2005-09" db="EMBL/GenBank/DDBJ databases">
        <authorList>
            <person name="Mural R.J."/>
            <person name="Istrail S."/>
            <person name="Sutton G.G."/>
            <person name="Florea L."/>
            <person name="Halpern A.L."/>
            <person name="Mobarry C.M."/>
            <person name="Lippert R."/>
            <person name="Walenz B."/>
            <person name="Shatkay H."/>
            <person name="Dew I."/>
            <person name="Miller J.R."/>
            <person name="Flanigan M.J."/>
            <person name="Edwards N.J."/>
            <person name="Bolanos R."/>
            <person name="Fasulo D."/>
            <person name="Halldorsson B.V."/>
            <person name="Hannenhalli S."/>
            <person name="Turner R."/>
            <person name="Yooseph S."/>
            <person name="Lu F."/>
            <person name="Nusskern D.R."/>
            <person name="Shue B.C."/>
            <person name="Zheng X.H."/>
            <person name="Zhong F."/>
            <person name="Delcher A.L."/>
            <person name="Huson D.H."/>
            <person name="Kravitz S.A."/>
            <person name="Mouchard L."/>
            <person name="Reinert K."/>
            <person name="Remington K.A."/>
            <person name="Clark A.G."/>
            <person name="Waterman M.S."/>
            <person name="Eichler E.E."/>
            <person name="Adams M.D."/>
            <person name="Hunkapiller M.W."/>
            <person name="Myers E.W."/>
            <person name="Venter J.C."/>
        </authorList>
    </citation>
    <scope>NUCLEOTIDE SEQUENCE [LARGE SCALE GENOMIC DNA]</scope>
</reference>
<reference key="9">
    <citation type="journal article" date="2004" name="Genome Res.">
        <title>The status, quality, and expansion of the NIH full-length cDNA project: the Mammalian Gene Collection (MGC).</title>
        <authorList>
            <consortium name="The MGC Project Team"/>
        </authorList>
    </citation>
    <scope>NUCLEOTIDE SEQUENCE [LARGE SCALE MRNA] (ISOFORM 1)</scope>
    <source>
        <tissue>Brain</tissue>
    </source>
</reference>
<reference key="10">
    <citation type="journal article" date="1996" name="Hum. Genet.">
        <title>Two novel mutations in the aquaporin-2 and the vasopressin V2 receptor genes in patients with congenital nephrogenic diabetes insipidus.</title>
        <authorList>
            <person name="Oksche A."/>
            <person name="Moeller A."/>
            <person name="Dickson J."/>
            <person name="Rosendahl W."/>
            <person name="Rascher W."/>
            <person name="Bichet D.G."/>
            <person name="Rosenthal W."/>
        </authorList>
    </citation>
    <scope>NUCLEOTIDE SEQUENCE [MRNA] OF 307-371</scope>
</reference>
<reference key="11">
    <citation type="journal article" date="1997" name="Mol. Pharmacol.">
        <title>Palmitoylation of the V2 vasopressin receptor.</title>
        <authorList>
            <person name="Sadeghi H.M."/>
            <person name="Innamorati G."/>
            <person name="Dagarag M."/>
            <person name="Birnbaumer M."/>
        </authorList>
    </citation>
    <scope>PALMITOYLATION AT CYS-341 AND CYS-342</scope>
    <scope>MUTAGENESIS OF CYS-341 AND CYS-342</scope>
</reference>
<reference key="12">
    <citation type="journal article" date="2011" name="Mol. Pharmacol.">
        <title>Regulation of M(3) muscarinic receptor expression and function by transmembrane protein 147.</title>
        <authorList>
            <person name="Rosemond E."/>
            <person name="Rossi M."/>
            <person name="McMillin S.M."/>
            <person name="Scarselli M."/>
            <person name="Donaldson J.G."/>
            <person name="Wess J."/>
        </authorList>
    </citation>
    <scope>INTERACTION WITH TMEM147</scope>
</reference>
<reference key="13">
    <citation type="journal article" date="2012" name="PLoS ONE">
        <title>Mammalian alpha arrestins link activated seven transmembrane receptors to Nedd4 family e3 ubiquitin ligases and interact with beta arrestins.</title>
        <authorList>
            <person name="Shea F.F."/>
            <person name="Rowell J.L."/>
            <person name="Li Y."/>
            <person name="Chang T.H."/>
            <person name="Alvarez C.E."/>
        </authorList>
    </citation>
    <scope>INTERACTION WITH ARRDC4</scope>
    <scope>IDENTIFICATION IN A COMPLEX WITH HGS AND ARRDC4</scope>
    <scope>SUBCELLULAR LOCATION</scope>
</reference>
<reference key="14">
    <citation type="journal article" date="1992" name="Nature">
        <title>Molecular identification of the gene responsible for congenital nephrogenic diabetes insipidus.</title>
        <authorList>
            <person name="Rosenthal W."/>
            <person name="Seibold A."/>
            <person name="Antaramian A."/>
            <person name="Lonergan M."/>
            <person name="Arthus M.-F."/>
            <person name="Hendy G.N."/>
            <person name="Birnbaumer M."/>
            <person name="Bichet D.G."/>
        </authorList>
    </citation>
    <scope>VARIANT NDI1 ASP-132</scope>
</reference>
<reference key="15">
    <citation type="journal article" date="1992" name="Nat. Genet.">
        <title>Mutations in the vasopressin type 2 receptor gene (AVPR2) associated with nephrogenic diabetes insipidus.</title>
        <authorList>
            <person name="van den Ouweland A.M.W."/>
            <person name="Dreesen J.C.F.M."/>
            <person name="Verdijk M."/>
            <person name="Knoers N.V.A.M."/>
            <person name="Monnens L.A.H."/>
            <person name="Rocchi M."/>
            <person name="van Oost B.A."/>
        </authorList>
    </citation>
    <scope>VARIANTS NDI1 CYS-185; CYS-203 AND CYS-205</scope>
</reference>
<reference key="16">
    <citation type="journal article" date="1992" name="Nat. Genet.">
        <title>Mutations in the V2 vasopressin receptor gene are associated with X-linked nephrogenic diabetes insipidus.</title>
        <authorList>
            <person name="Pan Y."/>
            <person name="Metzenberg A."/>
            <person name="Das S."/>
            <person name="Jing B."/>
            <person name="Gitschier J."/>
        </authorList>
    </citation>
    <scope>VARIANTS NDI1 SER-128; CYS-181; ARG-286 AND 247-ARG--GLY-250 DEL</scope>
</reference>
<reference key="17">
    <citation type="journal article" date="1993" name="Biochem. Biophys. Res. Commun.">
        <title>Two novel mutations in the vasopressin V2 receptor gene in unrelated Japanese kindreds with nephrogenic diabetes insipidus.</title>
        <authorList>
            <person name="Tsukaguchi H."/>
            <person name="Matsubara H."/>
            <person name="Aritaki S."/>
            <person name="Kimura T."/>
            <person name="Abe S."/>
            <person name="Inada M."/>
        </authorList>
    </citation>
    <scope>VARIANTS NDI1 PRO-143 AND VAL-277 DEL</scope>
</reference>
<reference key="18">
    <citation type="journal article" date="1993" name="N. Engl. J. Med.">
        <title>A molecular defect in the vasopressin V2-receptor gene causing nephrogenic diabetes insipidus.</title>
        <authorList>
            <person name="Holtzman E.J."/>
            <person name="Harris H.W. Jr."/>
            <person name="Kolakowski L.F. Jr."/>
            <person name="Guay-Woodford L.M."/>
            <person name="Botelho B."/>
            <person name="Ausiello D.A."/>
        </authorList>
    </citation>
    <scope>VARIANT NDI1 TRP-113</scope>
</reference>
<reference key="19">
    <citation type="journal article" date="1993" name="J. Biol. Chem.">
        <title>Nephrogenic diabetes insipidus. A V2 vasopressin receptor unable to stimulate adenylyl cyclase.</title>
        <authorList>
            <person name="Rosenthal W."/>
            <person name="Antaramian A."/>
            <person name="Gilbert S."/>
            <person name="Birnbaumer M."/>
        </authorList>
    </citation>
    <scope>VARIANT NDI1 HIS-137</scope>
</reference>
<reference key="20">
    <citation type="journal article" date="1994" name="Am. J. Hum. Genet.">
        <title>Nature and recurrence of AVPR2 mutations in X-linked nephrogenic diabetes insipidus.</title>
        <authorList>
            <person name="Bichet D.G."/>
            <person name="Birnbaumer M."/>
            <person name="Lonergan M."/>
            <person name="Arthus M.-F."/>
            <person name="Rosenthal W."/>
            <person name="Goodyer P."/>
            <person name="Nivet H."/>
            <person name="Benoit S."/>
            <person name="Giampietro P."/>
            <person name="Simonetti S."/>
            <person name="Fish A."/>
            <person name="Whitley C.B."/>
            <person name="Jaeger P."/>
            <person name="Gertner J."/>
            <person name="New M."/>
            <person name="Dibona F.J."/>
            <person name="Kaplan B.S."/>
            <person name="Robertson G.L."/>
            <person name="Hendy G.N."/>
            <person name="Fujiwara T.M."/>
            <person name="Morgan K."/>
        </authorList>
    </citation>
    <scope>VARIANTS NDI1 MET-88; CYS-106; ARG-112; TRP-113; PHE-126; SER-128; HIS-137; SER-164; LEU-167; CYS-181; CYS-202 AND PRO-285</scope>
</reference>
<reference key="21">
    <citation type="journal article" date="1994" name="Biochem. Biophys. Res. Commun.">
        <title>Two novel mutations in the vasopressin V2 receptor gene in patients with congenital nephrogenic diabetes insipidus.</title>
        <authorList>
            <person name="Oksche A."/>
            <person name="Dickson J."/>
            <person name="Schuelein R."/>
            <person name="Hansjoerg W.S."/>
            <person name="Mueller M."/>
            <person name="Rascher W."/>
            <person name="Birnbaumer M."/>
            <person name="Rosenthal W."/>
        </authorList>
    </citation>
    <scope>VARIANTS NDI1 PRO-44 AND THR-167</scope>
</reference>
<reference key="22">
    <citation type="journal article" date="1994" name="Hum. Mol. Genet.">
        <title>Novel mutations in the V2 vasopressin receptor gene of patients with X-linked nephrogenic diabetes insipidus.</title>
        <authorList>
            <person name="Wenkert D."/>
            <person name="Merendino J.J. Jr."/>
            <person name="Shenker A."/>
            <person name="Thambi N."/>
            <person name="Robertson G.L."/>
            <person name="Moses A.M."/>
            <person name="Spiegel A.M."/>
        </authorList>
    </citation>
    <scope>VARIANTS NDI1 ALA-277; CYS-280 AND PRO-292</scope>
</reference>
<reference key="23">
    <citation type="journal article" date="1994" name="Hum. Mol. Genet.">
        <title>Mutations in the vasopressin V2-receptor gene in three families of Italian descent with nephrogenic diabetes insipidus.</title>
        <authorList>
            <person name="Faa V."/>
            <person name="Ventruto M.L."/>
            <person name="Loche S."/>
            <person name="Bozzola M."/>
            <person name="Podda R."/>
            <person name="Cao A."/>
            <person name="Rosatelli M.C."/>
        </authorList>
    </citation>
    <scope>VARIANTS NDI1 SER-128; VAL-277 DEL AND LEU-286</scope>
</reference>
<reference key="24">
    <citation type="journal article" date="1994" name="J. Clin. Endocrinol. Metab.">
        <title>Novel mutations in the V2 vasopressin receptor gene in two pedigrees with congenital nephrogenic diabetes insipidus.</title>
        <authorList>
            <person name="Yuasa H."/>
            <person name="Ito M."/>
            <person name="Oiso Y."/>
            <person name="Kurokawa M."/>
            <person name="Watanabe T."/>
            <person name="Oda Y."/>
            <person name="Ishizuka T."/>
            <person name="Tani N."/>
            <person name="Ito S."/>
            <person name="Shibata A."/>
            <person name="Saito H."/>
        </authorList>
    </citation>
    <scope>VARIANT NDI1 ARG-80</scope>
</reference>
<reference key="25">
    <citation type="journal article" date="1994" name="Kidney Int.">
        <title>Inheritance of mutations in the V2 receptor gene in thirteen families with nephrogenic diabetes insipidus.</title>
        <authorList>
            <person name="Knoers N.V."/>
            <person name="van den Ouweland A.M."/>
            <person name="Verdijk M."/>
            <person name="Monnens L.A."/>
            <person name="van Oost B.A."/>
        </authorList>
    </citation>
    <scope>VARIANTS NDI1 PRO-62 AND PHE-81</scope>
</reference>
<reference key="26">
    <citation type="journal article" date="1994" name="Mol. Endocrinol.">
        <title>An extracellular congenital nephrogenic diabetes insipidus mutation of the vasopressin receptor reduces cell surface expression, affinity for ligand, and coupling to the Gs/adenylyl cyclase system.</title>
        <authorList>
            <person name="Birnbaumer M."/>
            <person name="Gilbert S."/>
            <person name="Rosenthal W."/>
        </authorList>
    </citation>
    <scope>VARIANT NDI1 TRP-113</scope>
</reference>
<reference key="27">
    <citation type="journal article" date="1994" name="Proc. Natl. Acad. Sci. U.S.A.">
        <title>Nephrogenic diabetes insipidus: an X chromosome-linked dominant inheritance pattern with a vasopressin type 2 receptor gene that is structurally normal.</title>
        <authorList>
            <person name="Friedman E."/>
            <person name="Bale A.E."/>
            <person name="Carson E."/>
            <person name="Boson W.L."/>
            <person name="Nordenskjoeld M."/>
            <person name="Ritzen M."/>
            <person name="Ferriera P.C."/>
            <person name="Jammal A."/>
            <person name="De Marco L."/>
        </authorList>
    </citation>
    <scope>VARIANT NDI1 CYS-280</scope>
</reference>
<reference key="28">
    <citation type="journal article" date="1995" name="Hum. Genet.">
        <title>Clinical phenotype of nephrogenic diabetes insipidus in females heterozygous for a vasopressin type 2 receptor mutation.</title>
        <authorList>
            <person name="van Lieburg A.F."/>
            <person name="Verdijk M.A."/>
            <person name="Schoute F."/>
            <person name="Ligtenberg M.J."/>
            <person name="van Oost B.A."/>
            <person name="Waldhauser F."/>
            <person name="Dobner M."/>
            <person name="Monnens L.A."/>
            <person name="Knoers N.V."/>
        </authorList>
    </citation>
    <scope>VARIANT NDI1 ARG-219</scope>
</reference>
<reference key="29">
    <citation type="journal article" date="1995" name="J. Clin. Invest.">
        <title>Binding-, intracellular transport-, and biosynthesis-defective mutants of vasopressin type 2 receptor in patients with X-linked nephrogenic diabetes insipidus.</title>
        <authorList>
            <person name="Tsukaguchi H."/>
            <person name="Matsubara H."/>
            <person name="Taketani S."/>
            <person name="Mori Y."/>
            <person name="Seido T."/>
            <person name="Inada M."/>
        </authorList>
    </citation>
    <scope>VARIANTS NDI1 PRO-143; CYS-202 AND VAL-277 DEL</scope>
</reference>
<reference key="30">
    <citation type="journal article" date="1996" name="Pediatr. Res.">
        <title>Three novel AVPR2 mutations in three Japanese families with X-linked nephrogenic diabetes insipidus.</title>
        <authorList>
            <person name="Tajima T."/>
            <person name="Nakae J."/>
            <person name="Takekoshi Y."/>
            <person name="Takahashi Y."/>
            <person name="Yuri K."/>
            <person name="Nagashima T."/>
            <person name="Fujieda K."/>
        </authorList>
    </citation>
    <scope>VARIANT NDI1 HIS-322</scope>
</reference>
<reference key="31">
    <citation type="journal article" date="1997" name="J. Am. Soc. Nephrol.">
        <title>Mutations in the vasopressin V2 receptor and aquaporin-2 genes in 12 families with congenital nephrogenic diabetes insipidus.</title>
        <authorList>
            <person name="Vargas-Poussou R."/>
            <person name="Forestier L."/>
            <person name="Dautzenberg M.D."/>
            <person name="Niaudet P."/>
            <person name="Dechaux M."/>
            <person name="Antignac C."/>
        </authorList>
    </citation>
    <scope>VARIANTS NDI1 PRO-43; GLU-107 AND SER-322</scope>
</reference>
<reference key="32">
    <citation type="journal article" date="1997" name="Mol. Endocrinol.">
        <title>Biochemical basis of partial nephrogenic diabetes insipidus phenotypes.</title>
        <authorList>
            <person name="Sadeghi H."/>
            <person name="Robertson G.L."/>
            <person name="Bichet D.G."/>
            <person name="Innamorati G."/>
            <person name="Birnbaumer M."/>
        </authorList>
    </citation>
    <scope>VARIANT NDI1 ASP-201</scope>
</reference>
<reference key="33">
    <citation type="journal article" date="1997" name="Nephron Exp. Nephrol.">
        <title>Six novel mutations in the vasopressin V2 receptor gene causing nephrogenic diabetes insipidus.</title>
        <authorList>
            <person name="Cheong H.I."/>
            <person name="Park H.W."/>
            <person name="Ha I.S."/>
            <person name="Moon H.N."/>
            <person name="Choi Y."/>
            <person name="Ko K.W."/>
            <person name="Jun J.K."/>
        </authorList>
    </citation>
    <scope>VARIANTS NDI1 ASN-207 AND PRO-219</scope>
</reference>
<reference key="34">
    <citation type="journal article" date="1998" name="Hum. Mutat. Suppl.">
        <title>Mutational analyses of AVPR2 gene in three Japanese families with X-linked nephrogenic diabetes insipidus: two recurrent mutations, R137H and deltaV278, caused by the hypermutability at CpG dinucleotides.</title>
        <authorList>
            <person name="Shoji Y."/>
            <person name="Takahashi T."/>
            <person name="Suzuki Y."/>
            <person name="Suzuki T."/>
            <person name="Komatsu K."/>
            <person name="Hirono H."/>
            <person name="Shoji Y."/>
            <person name="Yokoyama T."/>
            <person name="Kito H."/>
            <person name="Takada G."/>
        </authorList>
    </citation>
    <scope>VARIANTS NDI1 HIS-137; VAL-277 DEL AND PRO-309</scope>
</reference>
<reference key="35">
    <citation type="journal article" date="1998" name="Hum. Mutat.">
        <title>C112R, W323S, N317K mutations in the vasopressin V2 receptor gene in patients with nephrogenic diabetes insipidus.</title>
        <authorList>
            <person name="Szalai C."/>
            <person name="Triga D."/>
            <person name="Czinner A."/>
        </authorList>
    </citation>
    <scope>VARIANTS NDI1 ARG-112; LYS-317 AND SER-323</scope>
</reference>
<reference key="36">
    <citation type="journal article" date="1998" name="Hum. Mutat.">
        <title>V2 vasopressin receptor dysfunction in nephrogenic diabetes insipidus caused by different molecular mechanisms.</title>
        <authorList>
            <person name="Schoeneberg T."/>
            <person name="Schulz A."/>
            <person name="Biebermann H."/>
            <person name="Grueters A."/>
            <person name="Grimm T."/>
            <person name="Huebschmann K."/>
            <person name="Filler G."/>
            <person name="Gudermann T."/>
            <person name="Schultz G."/>
        </authorList>
    </citation>
    <scope>VARIANTS NDI1 HIS-137 AND CYS-181</scope>
</reference>
<reference key="37">
    <citation type="journal article" date="1998" name="J. Am. Soc. Nephrol.">
        <title>Functional studies of twelve mutant V2 vasopressin receptors related to nephrogenic diabetes insipidus: molecular basis of a mild clinical phenotype.</title>
        <authorList>
            <person name="Ala Y."/>
            <person name="Morin D."/>
            <person name="Mouillac B."/>
            <person name="Sabatier N."/>
            <person name="Vargas R."/>
            <person name="Cotte N."/>
            <person name="Dechaux M."/>
            <person name="Antignac C."/>
            <person name="Arthus M.F."/>
            <person name="Lonergan M."/>
            <person name="Turner M.S."/>
            <person name="Balestre M.N."/>
            <person name="Alonso G."/>
            <person name="Hibert M."/>
            <person name="Barberis C."/>
            <person name="Hendy G.N."/>
            <person name="Bichet D.G."/>
            <person name="Jard S."/>
        </authorList>
    </citation>
    <scope>VARIANTS NDI1 HIS-55; PHE-209 AND PRO-294</scope>
</reference>
<reference key="38">
    <citation type="journal article" date="1998" name="Kidney Int.">
        <title>AVPR2 variants and V2 vasopressin receptor function in nephrogenic diabetes insipidus.</title>
        <authorList>
            <person name="Wildin R.S."/>
            <person name="Cogdell D.E."/>
            <person name="Valadez V."/>
        </authorList>
    </citation>
    <scope>VARIANTS NDI1 ASP-55; ARG-92; ARG-122; LYS-272; ARG-309; ARG-315 AND TYR-321</scope>
</reference>
<reference key="39">
    <citation type="journal article" date="1999" name="Hum. Mutat.">
        <title>Molecular analyses of the vasopressin type 2 receptor and aquaporin-2 genes in Brazilian kindreds with nephrogenic diabetes insipidus.</title>
        <authorList>
            <person name="Rocha J.L."/>
            <person name="Friedman E."/>
            <person name="Boson W."/>
            <person name="Moreira A."/>
            <person name="Figueiredo B."/>
            <person name="Liberman B."/>
            <person name="de Lacerda L."/>
            <person name="Sandrini R."/>
            <person name="Graf H."/>
            <person name="Martins S."/>
            <person name="Punales M.K."/>
            <person name="De Marco L."/>
        </authorList>
    </citation>
    <scope>VARIANT NDI1 PRO-163</scope>
</reference>
<reference key="40">
    <citation type="journal article" date="2000" name="J. Am. Soc. Nephrol.">
        <title>Nephrogenic diabetes insipidus: functional analysis of new AVPR2 mutations identified in Italian families.</title>
        <authorList>
            <person name="Albertazzi E."/>
            <person name="Zanchetta D."/>
            <person name="Barbier P."/>
            <person name="Faranda S."/>
            <person name="Frattini A."/>
            <person name="Vezzoni P."/>
            <person name="Procaccio M."/>
            <person name="Bettinelli A."/>
            <person name="Guzzi F."/>
            <person name="Parenti M."/>
            <person name="Chini B."/>
        </authorList>
    </citation>
    <scope>VARIANTS NDI1 ASP-84; ARG-99; TYR-112; SER-173; PRO-282; ARG-309 AND ARG-323</scope>
</reference>
<reference key="41">
    <citation type="journal article" date="2000" name="J. Am. Soc. Nephrol.">
        <title>Report of 33 novel AVPR2 mutations and analysis of 117 families with X-linked nephrogenic diabetes insipidus.</title>
        <authorList>
            <person name="Arthus M.F."/>
            <person name="Lonergan M."/>
            <person name="Crumley M.J."/>
            <person name="Naumova A.K."/>
            <person name="Morin D."/>
            <person name="De Marco L.A."/>
            <person name="Kaplan B.S."/>
            <person name="Robertson G.L."/>
            <person name="Sasaki S."/>
            <person name="Morgan K."/>
            <person name="Bichet D.G."/>
            <person name="Fujiwara T.M."/>
        </authorList>
    </citation>
    <scope>VARIANTS NDI1 GLN-94; LYS-123; PRO-135; LEU-174; GLY-191; SER-214; THR-217; SER-286; PRO-289; ARG-315; ASP-321 AND LYS-321</scope>
</reference>
<reference key="42">
    <citation type="journal article" date="2000" name="J. Clin. Endocrinol. Metab.">
        <title>Functional characterization of the molecular defects causing nephrogenic diabetes insipidus in eight families.</title>
        <authorList>
            <person name="Pasel K."/>
            <person name="Schulz A."/>
            <person name="Timmermann K."/>
            <person name="Linnemann K."/>
            <person name="Hoeltzenbein M."/>
            <person name="Jaaskelainen J."/>
            <person name="Gruters A."/>
            <person name="Filler G."/>
            <person name="Schoneberg T."/>
        </authorList>
    </citation>
    <scope>VARIANTS NDI1 LYS-46; VAL-105 AND PHE-130</scope>
</reference>
<reference key="43">
    <citation type="journal article" date="2000" name="Mol. Cell. Endocrinol.">
        <title>Misfolded vasopressin V2 receptors caused by extracellular point mutations entail congenital nephrogenic diabetes insipidus.</title>
        <authorList>
            <person name="Postina R."/>
            <person name="Ufer E."/>
            <person name="Pfeiffer R."/>
            <person name="Knoers N.V."/>
            <person name="Fahrenholz F."/>
        </authorList>
    </citation>
    <scope>CHARACTERIZATION OF VARIANTS NDI1 ASN-204; CYS-205 AND ASP-206</scope>
</reference>
<reference key="44">
    <citation type="journal article" date="2001" name="J. Clin. Endocrinol. Metab.">
        <title>The property of a novel V2 receptor mutant in a patient with nephrogenic diabetes insipidus.</title>
        <authorList>
            <person name="Inaba S."/>
            <person name="Hatakeyama H."/>
            <person name="Taniguchi N."/>
            <person name="Miyamori I."/>
        </authorList>
    </citation>
    <scope>VARIANT NDI1 CYS-104</scope>
</reference>
<reference key="45">
    <citation type="journal article" date="2001" name="Pediatr. Nephrol.">
        <title>Molecular and cellular defects in nephrogenic diabetes insipidus.</title>
        <authorList>
            <person name="Knoers N.V."/>
            <person name="Deen P.M."/>
        </authorList>
    </citation>
    <scope>VARIANT NDI1 GLN-83</scope>
</reference>
<reference key="46">
    <citation type="journal article" date="2002" name="J. Hum. Genet.">
        <title>Identification of mutations in the arginine vasopressin receptor 2 gene causing nephrogenic diabetes insipidus in Chinese patients.</title>
        <authorList>
            <person name="Chen C.H."/>
            <person name="Chen W.Y."/>
            <person name="Liu H.L."/>
            <person name="Liu T.T."/>
            <person name="Tsou A.P."/>
            <person name="Lin C.Y."/>
            <person name="Chao T."/>
            <person name="Qi Y."/>
            <person name="Hsiao K.J."/>
        </authorList>
    </citation>
    <scope>VARIANTS NDI1 CYS-106 AND LEU-287</scope>
</reference>
<reference key="47">
    <citation type="journal article" date="2005" name="N. Engl. J. Med.">
        <title>Nephrogenic syndrome of inappropriate antidiuresis.</title>
        <authorList>
            <person name="Feldman B.J."/>
            <person name="Rosenthal S.M."/>
            <person name="Vargas G.A."/>
            <person name="Fenwick R.G."/>
            <person name="Huang E.A."/>
            <person name="Matsuda-Abedini M."/>
            <person name="Lustig R.H."/>
            <person name="Mathias R.S."/>
            <person name="Portale A.A."/>
            <person name="Miller W.L."/>
            <person name="Gitelman S.E."/>
        </authorList>
    </citation>
    <scope>VARIANTS NSIAD CYS-137 AND LEU-137</scope>
</reference>
<reference key="48">
    <citation type="journal article" date="2006" name="Genet. Med.">
        <title>Novel mutations underlying nephrogenic diabetes insipidus in Arab families.</title>
        <authorList>
            <person name="Carroll P."/>
            <person name="Al-Mojalli H."/>
            <person name="Al-Abbad A."/>
            <person name="Al-Hassoun I."/>
            <person name="Al-Hamed M."/>
            <person name="Al-Amr R."/>
            <person name="Butt A.I."/>
            <person name="Meyer B.F."/>
        </authorList>
    </citation>
    <scope>VARIANTS NDI1 ASP-122 AND HIS-137</scope>
</reference>
<reference key="49">
    <citation type="journal article" date="2006" name="Science">
        <title>The consensus coding sequences of human breast and colorectal cancers.</title>
        <authorList>
            <person name="Sjoeblom T."/>
            <person name="Jones S."/>
            <person name="Wood L.D."/>
            <person name="Parsons D.W."/>
            <person name="Lin J."/>
            <person name="Barber T.D."/>
            <person name="Mandelker D."/>
            <person name="Leary R.J."/>
            <person name="Ptak J."/>
            <person name="Silliman N."/>
            <person name="Szabo S."/>
            <person name="Buckhaults P."/>
            <person name="Farrell C."/>
            <person name="Meeh P."/>
            <person name="Markowitz S.D."/>
            <person name="Willis J."/>
            <person name="Dawson D."/>
            <person name="Willson J.K.V."/>
            <person name="Gazdar A.F."/>
            <person name="Hartigan J."/>
            <person name="Wu L."/>
            <person name="Liu C."/>
            <person name="Parmigiani G."/>
            <person name="Park B.H."/>
            <person name="Bachman K.E."/>
            <person name="Papadopoulos N."/>
            <person name="Vogelstein B."/>
            <person name="Kinzler K.W."/>
            <person name="Velculescu V.E."/>
        </authorList>
    </citation>
    <scope>VARIANT [LARGE SCALE ANALYSIS] HIS-247</scope>
</reference>
<proteinExistence type="evidence at protein level"/>
<name>V2R_HUMAN</name>
<gene>
    <name type="primary">AVPR2</name>
    <name type="synonym">ADHR</name>
    <name type="synonym">DIR</name>
    <name type="synonym">DIR3</name>
    <name type="synonym">V2R</name>
</gene>
<accession>P30518</accession>
<accession>C5HF20</accession>
<accession>O43192</accession>
<accession>Q3MJD3</accession>
<accession>Q9UCV9</accession>
<keyword id="KW-0002">3D-structure</keyword>
<keyword id="KW-0025">Alternative splicing</keyword>
<keyword id="KW-1003">Cell membrane</keyword>
<keyword id="KW-0218">Diabetes insipidus</keyword>
<keyword id="KW-0225">Disease variant</keyword>
<keyword id="KW-0297">G-protein coupled receptor</keyword>
<keyword id="KW-0325">Glycoprotein</keyword>
<keyword id="KW-0449">Lipoprotein</keyword>
<keyword id="KW-0472">Membrane</keyword>
<keyword id="KW-0564">Palmitate</keyword>
<keyword id="KW-1267">Proteomics identification</keyword>
<keyword id="KW-0675">Receptor</keyword>
<keyword id="KW-1185">Reference proteome</keyword>
<keyword id="KW-0807">Transducer</keyword>
<keyword id="KW-0812">Transmembrane</keyword>
<keyword id="KW-1133">Transmembrane helix</keyword>
<protein>
    <recommendedName>
        <fullName>Vasopressin V2 receptor</fullName>
        <shortName>V2R</shortName>
    </recommendedName>
    <alternativeName>
        <fullName>AVPR V2</fullName>
    </alternativeName>
    <alternativeName>
        <fullName>Antidiuretic hormone receptor</fullName>
    </alternativeName>
    <alternativeName>
        <fullName>Renal-type arginine vasopressin receptor</fullName>
    </alternativeName>
</protein>
<dbReference type="EMBL" id="L22206">
    <property type="protein sequence ID" value="AAA03651.1"/>
    <property type="molecule type" value="Genomic_DNA"/>
</dbReference>
<dbReference type="EMBL" id="Z11687">
    <property type="protein sequence ID" value="CAA77746.1"/>
    <property type="molecule type" value="mRNA"/>
</dbReference>
<dbReference type="EMBL" id="U04357">
    <property type="protein sequence ID" value="AAC09005.1"/>
    <property type="molecule type" value="Genomic_DNA"/>
</dbReference>
<dbReference type="EMBL" id="AF030626">
    <property type="protein sequence ID" value="AAB86428.1"/>
    <property type="molecule type" value="mRNA"/>
</dbReference>
<dbReference type="EMBL" id="AF101727">
    <property type="protein sequence ID" value="AAD16444.1"/>
    <property type="molecule type" value="mRNA"/>
</dbReference>
<dbReference type="EMBL" id="AF032388">
    <property type="protein sequence ID" value="AAB87678.1"/>
    <property type="molecule type" value="mRNA"/>
</dbReference>
<dbReference type="EMBL" id="AY242131">
    <property type="protein sequence ID" value="AAO92298.1"/>
    <property type="molecule type" value="mRNA"/>
</dbReference>
<dbReference type="EMBL" id="FJ411207">
    <property type="protein sequence ID" value="ACR39021.1"/>
    <property type="molecule type" value="Genomic_DNA"/>
</dbReference>
<dbReference type="EMBL" id="CH471172">
    <property type="protein sequence ID" value="EAW72783.1"/>
    <property type="molecule type" value="Genomic_DNA"/>
</dbReference>
<dbReference type="EMBL" id="CH471172">
    <property type="protein sequence ID" value="EAW72784.1"/>
    <property type="molecule type" value="Genomic_DNA"/>
</dbReference>
<dbReference type="EMBL" id="CH471172">
    <property type="protein sequence ID" value="EAW72785.1"/>
    <property type="molecule type" value="Genomic_DNA"/>
</dbReference>
<dbReference type="EMBL" id="BC101484">
    <property type="protein sequence ID" value="AAI01485.1"/>
    <property type="molecule type" value="mRNA"/>
</dbReference>
<dbReference type="EMBL" id="BC112181">
    <property type="protein sequence ID" value="AAI12182.1"/>
    <property type="molecule type" value="mRNA"/>
</dbReference>
<dbReference type="CCDS" id="CCDS14735.1">
    <molecule id="P30518-1"/>
</dbReference>
<dbReference type="CCDS" id="CCDS55539.1">
    <molecule id="P30518-2"/>
</dbReference>
<dbReference type="PIR" id="I51865">
    <property type="entry name" value="I51865"/>
</dbReference>
<dbReference type="RefSeq" id="NP_000045.1">
    <molecule id="P30518-1"/>
    <property type="nucleotide sequence ID" value="NM_000054.7"/>
</dbReference>
<dbReference type="RefSeq" id="NP_001139623.1">
    <molecule id="P30518-2"/>
    <property type="nucleotide sequence ID" value="NM_001146151.3"/>
</dbReference>
<dbReference type="RefSeq" id="XP_006724891.1">
    <property type="nucleotide sequence ID" value="XM_006724828.3"/>
</dbReference>
<dbReference type="PDB" id="4JQI">
    <property type="method" value="X-ray"/>
    <property type="resolution" value="2.60 A"/>
    <property type="chains" value="V=343-371"/>
</dbReference>
<dbReference type="PDB" id="6NI2">
    <property type="method" value="EM"/>
    <property type="resolution" value="4.00 A"/>
    <property type="chains" value="V=343-368"/>
</dbReference>
<dbReference type="PDB" id="6U1N">
    <property type="method" value="EM"/>
    <property type="resolution" value="4.00 A"/>
    <property type="chains" value="R=343-371"/>
</dbReference>
<dbReference type="PDB" id="7BB6">
    <property type="method" value="EM"/>
    <property type="resolution" value="4.20 A"/>
    <property type="chains" value="A=3-371"/>
</dbReference>
<dbReference type="PDB" id="7BB7">
    <property type="method" value="EM"/>
    <property type="resolution" value="4.40 A"/>
    <property type="chains" value="A=3-371"/>
</dbReference>
<dbReference type="PDB" id="7DF9">
    <property type="method" value="X-ray"/>
    <property type="resolution" value="3.17 A"/>
    <property type="chains" value="V=346-368"/>
</dbReference>
<dbReference type="PDB" id="7DFA">
    <property type="method" value="X-ray"/>
    <property type="resolution" value="2.54 A"/>
    <property type="chains" value="V=346-368"/>
</dbReference>
<dbReference type="PDB" id="7DFB">
    <property type="method" value="X-ray"/>
    <property type="resolution" value="3.28 A"/>
    <property type="chains" value="V=346-368"/>
</dbReference>
<dbReference type="PDB" id="7DFC">
    <property type="method" value="X-ray"/>
    <property type="resolution" value="2.49 A"/>
    <property type="chains" value="V=346-367"/>
</dbReference>
<dbReference type="PDB" id="7DW9">
    <property type="method" value="EM"/>
    <property type="resolution" value="2.60 A"/>
    <property type="chains" value="R=1-371"/>
</dbReference>
<dbReference type="PDB" id="7KH0">
    <property type="method" value="EM"/>
    <property type="resolution" value="2.80 A"/>
    <property type="chains" value="R=1-371"/>
</dbReference>
<dbReference type="PDB" id="7R0C">
    <property type="method" value="EM"/>
    <property type="resolution" value="4.73 A"/>
    <property type="chains" value="A=4-371"/>
</dbReference>
<dbReference type="PDB" id="7R0J">
    <property type="method" value="EM"/>
    <property type="resolution" value="4.23 A"/>
    <property type="chains" value="A=356-368"/>
</dbReference>
<dbReference type="PDB" id="8GOC">
    <property type="method" value="EM"/>
    <property type="resolution" value="4.18 A"/>
    <property type="chains" value="G/U/V=343-371"/>
</dbReference>
<dbReference type="PDB" id="8I10">
    <property type="method" value="EM"/>
    <property type="resolution" value="3.96 A"/>
    <property type="chains" value="G/U/V=343-371"/>
</dbReference>
<dbReference type="PDB" id="8JRU">
    <property type="method" value="EM"/>
    <property type="resolution" value="3.50 A"/>
    <property type="chains" value="R=343-371"/>
</dbReference>
<dbReference type="PDB" id="8JRV">
    <property type="method" value="EM"/>
    <property type="resolution" value="3.30 A"/>
    <property type="chains" value="R=343-371"/>
</dbReference>
<dbReference type="PDB" id="8WRZ">
    <property type="method" value="EM"/>
    <property type="resolution" value="3.60 A"/>
    <property type="chains" value="V=343-367"/>
</dbReference>
<dbReference type="PDB" id="8WU1">
    <property type="method" value="EM"/>
    <property type="resolution" value="3.20 A"/>
    <property type="chains" value="R=342-371"/>
</dbReference>
<dbReference type="PDB" id="9BT8">
    <property type="method" value="EM"/>
    <property type="resolution" value="3.34 A"/>
    <property type="chains" value="V=343-371"/>
</dbReference>
<dbReference type="PDB" id="9CX3">
    <property type="method" value="EM"/>
    <property type="resolution" value="3.47 A"/>
    <property type="chains" value="V=343-371"/>
</dbReference>
<dbReference type="PDB" id="9CX9">
    <property type="method" value="EM"/>
    <property type="resolution" value="3.34 A"/>
    <property type="chains" value="V=343-371"/>
</dbReference>
<dbReference type="PDBsum" id="4JQI"/>
<dbReference type="PDBsum" id="6NI2"/>
<dbReference type="PDBsum" id="6U1N"/>
<dbReference type="PDBsum" id="7BB6"/>
<dbReference type="PDBsum" id="7BB7"/>
<dbReference type="PDBsum" id="7DF9"/>
<dbReference type="PDBsum" id="7DFA"/>
<dbReference type="PDBsum" id="7DFB"/>
<dbReference type="PDBsum" id="7DFC"/>
<dbReference type="PDBsum" id="7DW9"/>
<dbReference type="PDBsum" id="7KH0"/>
<dbReference type="PDBsum" id="7R0C"/>
<dbReference type="PDBsum" id="7R0J"/>
<dbReference type="PDBsum" id="8GOC"/>
<dbReference type="PDBsum" id="8I10"/>
<dbReference type="PDBsum" id="8JRU"/>
<dbReference type="PDBsum" id="8JRV"/>
<dbReference type="PDBsum" id="8WRZ"/>
<dbReference type="PDBsum" id="8WU1"/>
<dbReference type="PDBsum" id="9BT8"/>
<dbReference type="PDBsum" id="9CX3"/>
<dbReference type="PDBsum" id="9CX9"/>
<dbReference type="EMDB" id="EMD-12128"/>
<dbReference type="EMDB" id="EMD-12129"/>
<dbReference type="EMDB" id="EMD-14221"/>
<dbReference type="EMDB" id="EMD-20612"/>
<dbReference type="EMDB" id="EMD-22872"/>
<dbReference type="EMDB" id="EMD-30877"/>
<dbReference type="EMDB" id="EMD-34175"/>
<dbReference type="EMDB" id="EMD-35115"/>
<dbReference type="EMDB" id="EMD-36606"/>
<dbReference type="EMDB" id="EMD-36607"/>
<dbReference type="EMDB" id="EMD-37795"/>
<dbReference type="EMDB" id="EMD-37849"/>
<dbReference type="EMDB" id="EMD-44881"/>
<dbReference type="EMDB" id="EMD-45977"/>
<dbReference type="EMDB" id="EMD-45982"/>
<dbReference type="EMDB" id="EMD-9375"/>
<dbReference type="SMR" id="P30518"/>
<dbReference type="BioGRID" id="107035">
    <property type="interactions" value="286"/>
</dbReference>
<dbReference type="CORUM" id="P30518"/>
<dbReference type="ELM" id="P30518"/>
<dbReference type="FunCoup" id="P30518">
    <property type="interactions" value="940"/>
</dbReference>
<dbReference type="IntAct" id="P30518">
    <property type="interactions" value="108"/>
</dbReference>
<dbReference type="STRING" id="9606.ENSP00000496396"/>
<dbReference type="BindingDB" id="P30518"/>
<dbReference type="ChEMBL" id="CHEMBL1790"/>
<dbReference type="DrugBank" id="DB09059">
    <property type="generic name" value="Atosiban"/>
</dbReference>
<dbReference type="DrugBank" id="DB00872">
    <property type="generic name" value="Conivaptan"/>
</dbReference>
<dbReference type="DrugBank" id="DB00618">
    <property type="generic name" value="Demeclocycline"/>
</dbReference>
<dbReference type="DrugBank" id="DB00035">
    <property type="generic name" value="Desmopressin"/>
</dbReference>
<dbReference type="DrugBank" id="DB11734">
    <property type="generic name" value="Fedovapagon"/>
</dbReference>
<dbReference type="DrugBank" id="DB06666">
    <property type="generic name" value="Lixivaptan"/>
</dbReference>
<dbReference type="DrugBank" id="DB14642">
    <property type="generic name" value="Lypressin"/>
</dbReference>
<dbReference type="DrugBank" id="DB05091">
    <property type="generic name" value="M0002"/>
</dbReference>
<dbReference type="DrugBank" id="DB12643">
    <property type="generic name" value="Nelivaptan"/>
</dbReference>
<dbReference type="DrugBank" id="DB05838">
    <property type="generic name" value="OPC-51803"/>
</dbReference>
<dbReference type="DrugBank" id="DB00107">
    <property type="generic name" value="Oxytocin"/>
</dbReference>
<dbReference type="DrugBank" id="DB16279">
    <property type="generic name" value="Pecavaptan"/>
</dbReference>
<dbReference type="DrugBank" id="DB14923">
    <property type="generic name" value="Satavaptan"/>
</dbReference>
<dbReference type="DrugBank" id="DB02638">
    <property type="generic name" value="Terlipressin"/>
</dbReference>
<dbReference type="DrugBank" id="DB06212">
    <property type="generic name" value="Tolvaptan"/>
</dbReference>
<dbReference type="DrugBank" id="DB00067">
    <property type="generic name" value="Vasopressin"/>
</dbReference>
<dbReference type="DrugCentral" id="P30518"/>
<dbReference type="GuidetoPHARMACOLOGY" id="368"/>
<dbReference type="TCDB" id="9.A.14.10.3">
    <property type="family name" value="the g-protein-coupled receptor (gpcr) family"/>
</dbReference>
<dbReference type="GlyCosmos" id="P30518">
    <property type="glycosylation" value="1 site, No reported glycans"/>
</dbReference>
<dbReference type="GlyGen" id="P30518">
    <property type="glycosylation" value="2 sites, 1 O-linked glycan (1 site)"/>
</dbReference>
<dbReference type="iPTMnet" id="P30518"/>
<dbReference type="PhosphoSitePlus" id="P30518"/>
<dbReference type="SwissPalm" id="P30518"/>
<dbReference type="BioMuta" id="AVPR2"/>
<dbReference type="DMDM" id="267256"/>
<dbReference type="MassIVE" id="P30518"/>
<dbReference type="PaxDb" id="9606-ENSP00000351805"/>
<dbReference type="PeptideAtlas" id="P30518"/>
<dbReference type="TopDownProteomics" id="P30518-2">
    <molecule id="P30518-2"/>
</dbReference>
<dbReference type="Antibodypedia" id="17443">
    <property type="antibodies" value="293 antibodies from 32 providers"/>
</dbReference>
<dbReference type="DNASU" id="554"/>
<dbReference type="Ensembl" id="ENST00000337474.5">
    <molecule id="P30518-1"/>
    <property type="protein sequence ID" value="ENSP00000338072.5"/>
    <property type="gene ID" value="ENSG00000126895.16"/>
</dbReference>
<dbReference type="Ensembl" id="ENST00000370049.1">
    <molecule id="P30518-2"/>
    <property type="protein sequence ID" value="ENSP00000359066.1"/>
    <property type="gene ID" value="ENSG00000126895.16"/>
</dbReference>
<dbReference type="Ensembl" id="ENST00000646375.2">
    <molecule id="P30518-1"/>
    <property type="protein sequence ID" value="ENSP00000496396.1"/>
    <property type="gene ID" value="ENSG00000126895.16"/>
</dbReference>
<dbReference type="GeneID" id="554"/>
<dbReference type="KEGG" id="hsa:554"/>
<dbReference type="MANE-Select" id="ENST00000646375.2">
    <property type="protein sequence ID" value="ENSP00000496396.1"/>
    <property type="RefSeq nucleotide sequence ID" value="NM_000054.7"/>
    <property type="RefSeq protein sequence ID" value="NP_000045.1"/>
</dbReference>
<dbReference type="UCSC" id="uc004fjh.5">
    <molecule id="P30518-1"/>
    <property type="organism name" value="human"/>
</dbReference>
<dbReference type="AGR" id="HGNC:897"/>
<dbReference type="CTD" id="554"/>
<dbReference type="DisGeNET" id="554"/>
<dbReference type="GeneCards" id="AVPR2"/>
<dbReference type="GeneReviews" id="AVPR2"/>
<dbReference type="HGNC" id="HGNC:897">
    <property type="gene designation" value="AVPR2"/>
</dbReference>
<dbReference type="HPA" id="ENSG00000126895">
    <property type="expression patterns" value="Tissue enhanced (adipose tissue, kidney)"/>
</dbReference>
<dbReference type="MalaCards" id="AVPR2"/>
<dbReference type="MIM" id="300538">
    <property type="type" value="gene"/>
</dbReference>
<dbReference type="MIM" id="300539">
    <property type="type" value="phenotype"/>
</dbReference>
<dbReference type="MIM" id="304800">
    <property type="type" value="phenotype"/>
</dbReference>
<dbReference type="neXtProt" id="NX_P30518"/>
<dbReference type="OpenTargets" id="ENSG00000126895"/>
<dbReference type="Orphanet" id="223">
    <property type="disease" value="Arginine vasopressin resistance"/>
</dbReference>
<dbReference type="Orphanet" id="93606">
    <property type="disease" value="Nephrogenic syndrome of inappropriate antidiuresis"/>
</dbReference>
<dbReference type="PharmGKB" id="PA25189"/>
<dbReference type="VEuPathDB" id="HostDB:ENSG00000126895"/>
<dbReference type="eggNOG" id="KOG3656">
    <property type="taxonomic scope" value="Eukaryota"/>
</dbReference>
<dbReference type="GeneTree" id="ENSGT01050000244882"/>
<dbReference type="HOGENOM" id="CLU_009579_15_3_1"/>
<dbReference type="InParanoid" id="P30518"/>
<dbReference type="OMA" id="AFCQVRI"/>
<dbReference type="OrthoDB" id="5987909at2759"/>
<dbReference type="PAN-GO" id="P30518">
    <property type="GO annotations" value="6 GO annotations based on evolutionary models"/>
</dbReference>
<dbReference type="PhylomeDB" id="P30518"/>
<dbReference type="TreeFam" id="TF106499"/>
<dbReference type="PathwayCommons" id="P30518"/>
<dbReference type="Reactome" id="R-HSA-388479">
    <property type="pathway name" value="Vasopressin-like receptors"/>
</dbReference>
<dbReference type="Reactome" id="R-HSA-418555">
    <property type="pathway name" value="G alpha (s) signalling events"/>
</dbReference>
<dbReference type="Reactome" id="R-HSA-432040">
    <property type="pathway name" value="Vasopressin regulates renal water homeostasis via Aquaporins"/>
</dbReference>
<dbReference type="Reactome" id="R-HSA-8856825">
    <property type="pathway name" value="Cargo recognition for clathrin-mediated endocytosis"/>
</dbReference>
<dbReference type="Reactome" id="R-HSA-8856828">
    <property type="pathway name" value="Clathrin-mediated endocytosis"/>
</dbReference>
<dbReference type="Reactome" id="R-HSA-9036092">
    <property type="pathway name" value="Defective AVP does not bind AVPR2 and causes neurohypophyseal diabetes insipidus (NDI)"/>
</dbReference>
<dbReference type="SignaLink" id="P30518"/>
<dbReference type="SIGNOR" id="P30518"/>
<dbReference type="BioGRID-ORCS" id="554">
    <property type="hits" value="11 hits in 777 CRISPR screens"/>
</dbReference>
<dbReference type="EvolutionaryTrace" id="P30518"/>
<dbReference type="GeneWiki" id="Arginine_vasopressin_receptor_2"/>
<dbReference type="GenomeRNAi" id="554"/>
<dbReference type="Pharos" id="P30518">
    <property type="development level" value="Tclin"/>
</dbReference>
<dbReference type="PRO" id="PR:P30518"/>
<dbReference type="Proteomes" id="UP000005640">
    <property type="component" value="Chromosome X"/>
</dbReference>
<dbReference type="RNAct" id="P30518">
    <property type="molecule type" value="protein"/>
</dbReference>
<dbReference type="Bgee" id="ENSG00000126895">
    <property type="expression patterns" value="Expressed in apex of heart and 105 other cell types or tissues"/>
</dbReference>
<dbReference type="ExpressionAtlas" id="P30518">
    <property type="expression patterns" value="baseline and differential"/>
</dbReference>
<dbReference type="GO" id="GO:0030669">
    <property type="term" value="C:clathrin-coated endocytic vesicle membrane"/>
    <property type="evidence" value="ECO:0000304"/>
    <property type="project" value="Reactome"/>
</dbReference>
<dbReference type="GO" id="GO:0030139">
    <property type="term" value="C:endocytic vesicle"/>
    <property type="evidence" value="ECO:0000314"/>
    <property type="project" value="ARUK-UCL"/>
</dbReference>
<dbReference type="GO" id="GO:0005783">
    <property type="term" value="C:endoplasmic reticulum"/>
    <property type="evidence" value="ECO:0000304"/>
    <property type="project" value="ProtInc"/>
</dbReference>
<dbReference type="GO" id="GO:0005768">
    <property type="term" value="C:endosome"/>
    <property type="evidence" value="ECO:0000314"/>
    <property type="project" value="ARUK-UCL"/>
</dbReference>
<dbReference type="GO" id="GO:0005794">
    <property type="term" value="C:Golgi apparatus"/>
    <property type="evidence" value="ECO:0000304"/>
    <property type="project" value="ProtInc"/>
</dbReference>
<dbReference type="GO" id="GO:0016020">
    <property type="term" value="C:membrane"/>
    <property type="evidence" value="ECO:0000303"/>
    <property type="project" value="UniProtKB"/>
</dbReference>
<dbReference type="GO" id="GO:0048471">
    <property type="term" value="C:perinuclear region of cytoplasm"/>
    <property type="evidence" value="ECO:0000314"/>
    <property type="project" value="ARUK-UCL"/>
</dbReference>
<dbReference type="GO" id="GO:0005886">
    <property type="term" value="C:plasma membrane"/>
    <property type="evidence" value="ECO:0000314"/>
    <property type="project" value="ARUK-UCL"/>
</dbReference>
<dbReference type="GO" id="GO:0005000">
    <property type="term" value="F:vasopressin receptor activity"/>
    <property type="evidence" value="ECO:0000314"/>
    <property type="project" value="ARUK-UCL"/>
</dbReference>
<dbReference type="GO" id="GO:0007190">
    <property type="term" value="P:activation of adenylate cyclase activity"/>
    <property type="evidence" value="ECO:0000304"/>
    <property type="project" value="ProtInc"/>
</dbReference>
<dbReference type="GO" id="GO:0007188">
    <property type="term" value="P:adenylate cyclase-modulating G protein-coupled receptor signaling pathway"/>
    <property type="evidence" value="ECO:0000304"/>
    <property type="project" value="ProtInc"/>
</dbReference>
<dbReference type="GO" id="GO:0032870">
    <property type="term" value="P:cellular response to hormone stimulus"/>
    <property type="evidence" value="ECO:0000318"/>
    <property type="project" value="GO_Central"/>
</dbReference>
<dbReference type="GO" id="GO:0007186">
    <property type="term" value="P:G protein-coupled receptor signaling pathway"/>
    <property type="evidence" value="ECO:0000318"/>
    <property type="project" value="GO_Central"/>
</dbReference>
<dbReference type="GO" id="GO:0007599">
    <property type="term" value="P:hemostasis"/>
    <property type="evidence" value="ECO:0000304"/>
    <property type="project" value="ProtInc"/>
</dbReference>
<dbReference type="GO" id="GO:0008285">
    <property type="term" value="P:negative regulation of cell population proliferation"/>
    <property type="evidence" value="ECO:0000314"/>
    <property type="project" value="ARUK-UCL"/>
</dbReference>
<dbReference type="GO" id="GO:0008284">
    <property type="term" value="P:positive regulation of cell population proliferation"/>
    <property type="evidence" value="ECO:0007669"/>
    <property type="project" value="Ensembl"/>
</dbReference>
<dbReference type="GO" id="GO:0010628">
    <property type="term" value="P:positive regulation of gene expression"/>
    <property type="evidence" value="ECO:0000250"/>
    <property type="project" value="UniProtKB"/>
</dbReference>
<dbReference type="GO" id="GO:1902533">
    <property type="term" value="P:positive regulation of intracellular signal transduction"/>
    <property type="evidence" value="ECO:0007669"/>
    <property type="project" value="Ensembl"/>
</dbReference>
<dbReference type="GO" id="GO:0003084">
    <property type="term" value="P:positive regulation of systemic arterial blood pressure"/>
    <property type="evidence" value="ECO:0007669"/>
    <property type="project" value="Ensembl"/>
</dbReference>
<dbReference type="GO" id="GO:0045907">
    <property type="term" value="P:positive regulation of vasoconstriction"/>
    <property type="evidence" value="ECO:0000318"/>
    <property type="project" value="GO_Central"/>
</dbReference>
<dbReference type="GO" id="GO:0001992">
    <property type="term" value="P:regulation of systemic arterial blood pressure by vasopressin"/>
    <property type="evidence" value="ECO:0000318"/>
    <property type="project" value="GO_Central"/>
</dbReference>
<dbReference type="GO" id="GO:0003092">
    <property type="term" value="P:renal water retention"/>
    <property type="evidence" value="ECO:0000304"/>
    <property type="project" value="ProtInc"/>
</dbReference>
<dbReference type="GO" id="GO:0034097">
    <property type="term" value="P:response to cytokine"/>
    <property type="evidence" value="ECO:0007669"/>
    <property type="project" value="Ensembl"/>
</dbReference>
<dbReference type="GO" id="GO:0021537">
    <property type="term" value="P:telencephalon development"/>
    <property type="evidence" value="ECO:0007669"/>
    <property type="project" value="Ensembl"/>
</dbReference>
<dbReference type="CDD" id="cd15388">
    <property type="entry name" value="7tmA_V2R"/>
    <property type="match status" value="1"/>
</dbReference>
<dbReference type="FunFam" id="1.20.1070.10:FF:000190">
    <property type="entry name" value="Vasopressin V2 receptor"/>
    <property type="match status" value="1"/>
</dbReference>
<dbReference type="Gene3D" id="1.20.1070.10">
    <property type="entry name" value="Rhodopsin 7-helix transmembrane proteins"/>
    <property type="match status" value="1"/>
</dbReference>
<dbReference type="InterPro" id="IPR000276">
    <property type="entry name" value="GPCR_Rhodpsn"/>
</dbReference>
<dbReference type="InterPro" id="IPR017452">
    <property type="entry name" value="GPCR_Rhodpsn_7TM"/>
</dbReference>
<dbReference type="InterPro" id="IPR001817">
    <property type="entry name" value="Vasoprsn_rcpt"/>
</dbReference>
<dbReference type="InterPro" id="IPR000161">
    <property type="entry name" value="Vprsn_rcpt_V2"/>
</dbReference>
<dbReference type="PANTHER" id="PTHR24241">
    <property type="entry name" value="NEUROPEPTIDE RECEPTOR-RELATED G-PROTEIN COUPLED RECEPTOR"/>
    <property type="match status" value="1"/>
</dbReference>
<dbReference type="PANTHER" id="PTHR24241:SF20">
    <property type="entry name" value="VASOPRESSIN V2 RECEPTOR"/>
    <property type="match status" value="1"/>
</dbReference>
<dbReference type="Pfam" id="PF00001">
    <property type="entry name" value="7tm_1"/>
    <property type="match status" value="1"/>
</dbReference>
<dbReference type="PRINTS" id="PR00237">
    <property type="entry name" value="GPCRRHODOPSN"/>
</dbReference>
<dbReference type="PRINTS" id="PR00896">
    <property type="entry name" value="VASOPRESSINR"/>
</dbReference>
<dbReference type="PRINTS" id="PR00898">
    <property type="entry name" value="VASOPRSNV2R"/>
</dbReference>
<dbReference type="SUPFAM" id="SSF81321">
    <property type="entry name" value="Family A G protein-coupled receptor-like"/>
    <property type="match status" value="1"/>
</dbReference>
<dbReference type="PROSITE" id="PS00237">
    <property type="entry name" value="G_PROTEIN_RECEP_F1_1"/>
    <property type="match status" value="1"/>
</dbReference>
<dbReference type="PROSITE" id="PS50262">
    <property type="entry name" value="G_PROTEIN_RECEP_F1_2"/>
    <property type="match status" value="1"/>
</dbReference>